<accession>Q67RE7</accession>
<dbReference type="EC" id="7.3.2.1" evidence="1"/>
<dbReference type="EMBL" id="AP006840">
    <property type="protein sequence ID" value="BAD39746.1"/>
    <property type="molecule type" value="Genomic_DNA"/>
</dbReference>
<dbReference type="RefSeq" id="WP_011194894.1">
    <property type="nucleotide sequence ID" value="NC_006177.1"/>
</dbReference>
<dbReference type="SMR" id="Q67RE7"/>
<dbReference type="STRING" id="292459.STH761"/>
<dbReference type="KEGG" id="sth:STH761"/>
<dbReference type="eggNOG" id="COG1117">
    <property type="taxonomic scope" value="Bacteria"/>
</dbReference>
<dbReference type="HOGENOM" id="CLU_000604_1_22_9"/>
<dbReference type="OrthoDB" id="9802264at2"/>
<dbReference type="Proteomes" id="UP000000417">
    <property type="component" value="Chromosome"/>
</dbReference>
<dbReference type="GO" id="GO:0005886">
    <property type="term" value="C:plasma membrane"/>
    <property type="evidence" value="ECO:0007669"/>
    <property type="project" value="UniProtKB-SubCell"/>
</dbReference>
<dbReference type="GO" id="GO:0005524">
    <property type="term" value="F:ATP binding"/>
    <property type="evidence" value="ECO:0007669"/>
    <property type="project" value="UniProtKB-KW"/>
</dbReference>
<dbReference type="GO" id="GO:0016887">
    <property type="term" value="F:ATP hydrolysis activity"/>
    <property type="evidence" value="ECO:0007669"/>
    <property type="project" value="InterPro"/>
</dbReference>
<dbReference type="GO" id="GO:0015415">
    <property type="term" value="F:ATPase-coupled phosphate ion transmembrane transporter activity"/>
    <property type="evidence" value="ECO:0007669"/>
    <property type="project" value="UniProtKB-EC"/>
</dbReference>
<dbReference type="GO" id="GO:0035435">
    <property type="term" value="P:phosphate ion transmembrane transport"/>
    <property type="evidence" value="ECO:0007669"/>
    <property type="project" value="InterPro"/>
</dbReference>
<dbReference type="CDD" id="cd03260">
    <property type="entry name" value="ABC_PstB_phosphate_transporter"/>
    <property type="match status" value="1"/>
</dbReference>
<dbReference type="Gene3D" id="3.40.50.300">
    <property type="entry name" value="P-loop containing nucleotide triphosphate hydrolases"/>
    <property type="match status" value="1"/>
</dbReference>
<dbReference type="InterPro" id="IPR003593">
    <property type="entry name" value="AAA+_ATPase"/>
</dbReference>
<dbReference type="InterPro" id="IPR003439">
    <property type="entry name" value="ABC_transporter-like_ATP-bd"/>
</dbReference>
<dbReference type="InterPro" id="IPR017871">
    <property type="entry name" value="ABC_transporter-like_CS"/>
</dbReference>
<dbReference type="InterPro" id="IPR027417">
    <property type="entry name" value="P-loop_NTPase"/>
</dbReference>
<dbReference type="InterPro" id="IPR005670">
    <property type="entry name" value="PstB-like"/>
</dbReference>
<dbReference type="NCBIfam" id="TIGR00972">
    <property type="entry name" value="3a0107s01c2"/>
    <property type="match status" value="1"/>
</dbReference>
<dbReference type="PANTHER" id="PTHR43423">
    <property type="entry name" value="ABC TRANSPORTER I FAMILY MEMBER 17"/>
    <property type="match status" value="1"/>
</dbReference>
<dbReference type="PANTHER" id="PTHR43423:SF1">
    <property type="entry name" value="ABC TRANSPORTER I FAMILY MEMBER 17"/>
    <property type="match status" value="1"/>
</dbReference>
<dbReference type="Pfam" id="PF00005">
    <property type="entry name" value="ABC_tran"/>
    <property type="match status" value="1"/>
</dbReference>
<dbReference type="SMART" id="SM00382">
    <property type="entry name" value="AAA"/>
    <property type="match status" value="1"/>
</dbReference>
<dbReference type="SUPFAM" id="SSF52540">
    <property type="entry name" value="P-loop containing nucleoside triphosphate hydrolases"/>
    <property type="match status" value="1"/>
</dbReference>
<dbReference type="PROSITE" id="PS00211">
    <property type="entry name" value="ABC_TRANSPORTER_1"/>
    <property type="match status" value="1"/>
</dbReference>
<dbReference type="PROSITE" id="PS50893">
    <property type="entry name" value="ABC_TRANSPORTER_2"/>
    <property type="match status" value="1"/>
</dbReference>
<dbReference type="PROSITE" id="PS51238">
    <property type="entry name" value="PSTB"/>
    <property type="match status" value="1"/>
</dbReference>
<sequence>MAVVLASPAAGGVAAGGFVVRNLDLFYGTHQALHQISMTIPERAVTAIIGPSGCGKSTFLRCLNRMNDLVPDARIQGHVSFRGQDLYAPGADPVEIRYRIGMIFQKPNPFPKSIYENVAFGPRINGYDGDLDEIVEGALRRAALWDEVKDRLRKPALTLSGGQQQRLCIARALAVNPEVLLMDEPTSALDPIATGKIEELMTSLKQEYTIVLVTHSMQQAARVSDYTAFFLDGRLVEMDRTERIFSTPSDRRTEDYITGRFG</sequence>
<name>PSTB2_SYMTH</name>
<proteinExistence type="inferred from homology"/>
<evidence type="ECO:0000255" key="1">
    <source>
        <dbReference type="HAMAP-Rule" id="MF_01702"/>
    </source>
</evidence>
<reference key="1">
    <citation type="journal article" date="2004" name="Nucleic Acids Res.">
        <title>Genome sequence of Symbiobacterium thermophilum, an uncultivable bacterium that depends on microbial commensalism.</title>
        <authorList>
            <person name="Ueda K."/>
            <person name="Yamashita A."/>
            <person name="Ishikawa J."/>
            <person name="Shimada M."/>
            <person name="Watsuji T."/>
            <person name="Morimura K."/>
            <person name="Ikeda H."/>
            <person name="Hattori M."/>
            <person name="Beppu T."/>
        </authorList>
    </citation>
    <scope>NUCLEOTIDE SEQUENCE [LARGE SCALE GENOMIC DNA]</scope>
    <source>
        <strain>DSM 24528 / JCM 14929 / IAM 14863 / T</strain>
    </source>
</reference>
<gene>
    <name evidence="1" type="primary">pstB2</name>
    <name type="ordered locus">STH761</name>
</gene>
<keyword id="KW-0067">ATP-binding</keyword>
<keyword id="KW-1003">Cell membrane</keyword>
<keyword id="KW-0472">Membrane</keyword>
<keyword id="KW-0547">Nucleotide-binding</keyword>
<keyword id="KW-0592">Phosphate transport</keyword>
<keyword id="KW-1185">Reference proteome</keyword>
<keyword id="KW-1278">Translocase</keyword>
<keyword id="KW-0813">Transport</keyword>
<comment type="function">
    <text evidence="1">Part of the ABC transporter complex PstSACB involved in phosphate import. Responsible for energy coupling to the transport system.</text>
</comment>
<comment type="catalytic activity">
    <reaction evidence="1">
        <text>phosphate(out) + ATP + H2O = ADP + 2 phosphate(in) + H(+)</text>
        <dbReference type="Rhea" id="RHEA:24440"/>
        <dbReference type="ChEBI" id="CHEBI:15377"/>
        <dbReference type="ChEBI" id="CHEBI:15378"/>
        <dbReference type="ChEBI" id="CHEBI:30616"/>
        <dbReference type="ChEBI" id="CHEBI:43474"/>
        <dbReference type="ChEBI" id="CHEBI:456216"/>
        <dbReference type="EC" id="7.3.2.1"/>
    </reaction>
</comment>
<comment type="subunit">
    <text evidence="1">The complex is composed of two ATP-binding proteins (PstB), two transmembrane proteins (PstC and PstA) and a solute-binding protein (PstS).</text>
</comment>
<comment type="subcellular location">
    <subcellularLocation>
        <location evidence="1">Cell membrane</location>
        <topology evidence="1">Peripheral membrane protein</topology>
    </subcellularLocation>
</comment>
<comment type="similarity">
    <text evidence="1">Belongs to the ABC transporter superfamily. Phosphate importer (TC 3.A.1.7) family.</text>
</comment>
<organism>
    <name type="scientific">Symbiobacterium thermophilum (strain DSM 24528 / JCM 14929 / IAM 14863 / T)</name>
    <dbReference type="NCBI Taxonomy" id="292459"/>
    <lineage>
        <taxon>Bacteria</taxon>
        <taxon>Bacillati</taxon>
        <taxon>Bacillota</taxon>
        <taxon>Clostridia</taxon>
        <taxon>Eubacteriales</taxon>
        <taxon>Symbiobacteriaceae</taxon>
        <taxon>Symbiobacterium</taxon>
    </lineage>
</organism>
<protein>
    <recommendedName>
        <fullName evidence="1">Phosphate import ATP-binding protein PstB 2</fullName>
        <ecNumber evidence="1">7.3.2.1</ecNumber>
    </recommendedName>
    <alternativeName>
        <fullName evidence="1">ABC phosphate transporter 2</fullName>
    </alternativeName>
    <alternativeName>
        <fullName evidence="1">Phosphate-transporting ATPase 2</fullName>
    </alternativeName>
</protein>
<feature type="chain" id="PRO_0000092912" description="Phosphate import ATP-binding protein PstB 2">
    <location>
        <begin position="1"/>
        <end position="262"/>
    </location>
</feature>
<feature type="domain" description="ABC transporter" evidence="1">
    <location>
        <begin position="18"/>
        <end position="257"/>
    </location>
</feature>
<feature type="binding site" evidence="1">
    <location>
        <begin position="50"/>
        <end position="57"/>
    </location>
    <ligand>
        <name>ATP</name>
        <dbReference type="ChEBI" id="CHEBI:30616"/>
    </ligand>
</feature>